<evidence type="ECO:0000255" key="1">
    <source>
        <dbReference type="HAMAP-Rule" id="MF_01416"/>
    </source>
</evidence>
<proteinExistence type="inferred from homology"/>
<gene>
    <name evidence="1" type="primary">atpH</name>
    <name type="ordered locus">ECUMN_4265</name>
</gene>
<organism>
    <name type="scientific">Escherichia coli O17:K52:H18 (strain UMN026 / ExPEC)</name>
    <dbReference type="NCBI Taxonomy" id="585056"/>
    <lineage>
        <taxon>Bacteria</taxon>
        <taxon>Pseudomonadati</taxon>
        <taxon>Pseudomonadota</taxon>
        <taxon>Gammaproteobacteria</taxon>
        <taxon>Enterobacterales</taxon>
        <taxon>Enterobacteriaceae</taxon>
        <taxon>Escherichia</taxon>
    </lineage>
</organism>
<protein>
    <recommendedName>
        <fullName evidence="1">ATP synthase subunit delta</fullName>
    </recommendedName>
    <alternativeName>
        <fullName evidence="1">ATP synthase F(1) sector subunit delta</fullName>
    </alternativeName>
    <alternativeName>
        <fullName evidence="1">F-type ATPase subunit delta</fullName>
        <shortName evidence="1">F-ATPase subunit delta</shortName>
    </alternativeName>
</protein>
<sequence>MSEFITVARPYAKAAFDFAVEHQSVERWQDMLAFAAEVTKNEQMAELLSGALAPETLAESFIAVCGEQLDENGQNLIRVMAENGRLNALPDVLEQFIHLRAVSEATAEVDVISAAALSEQQLAKISAAMEKRLSRKVKLNCKIDKSVMAGVIIRAGDMVIDGSVRGRLERLADVLQS</sequence>
<feature type="chain" id="PRO_1000184702" description="ATP synthase subunit delta">
    <location>
        <begin position="1"/>
        <end position="177"/>
    </location>
</feature>
<dbReference type="EMBL" id="CU928163">
    <property type="protein sequence ID" value="CAR15405.1"/>
    <property type="molecule type" value="Genomic_DNA"/>
</dbReference>
<dbReference type="RefSeq" id="WP_001288587.1">
    <property type="nucleotide sequence ID" value="NC_011751.1"/>
</dbReference>
<dbReference type="RefSeq" id="YP_002414900.1">
    <property type="nucleotide sequence ID" value="NC_011751.1"/>
</dbReference>
<dbReference type="SMR" id="B7NF51"/>
<dbReference type="STRING" id="585056.ECUMN_4265"/>
<dbReference type="GeneID" id="93778232"/>
<dbReference type="KEGG" id="eum:ECUMN_4265"/>
<dbReference type="PATRIC" id="fig|585056.7.peg.4436"/>
<dbReference type="HOGENOM" id="CLU_085114_3_0_6"/>
<dbReference type="Proteomes" id="UP000007097">
    <property type="component" value="Chromosome"/>
</dbReference>
<dbReference type="GO" id="GO:0005886">
    <property type="term" value="C:plasma membrane"/>
    <property type="evidence" value="ECO:0007669"/>
    <property type="project" value="UniProtKB-SubCell"/>
</dbReference>
<dbReference type="GO" id="GO:0045259">
    <property type="term" value="C:proton-transporting ATP synthase complex"/>
    <property type="evidence" value="ECO:0007669"/>
    <property type="project" value="UniProtKB-KW"/>
</dbReference>
<dbReference type="GO" id="GO:0046933">
    <property type="term" value="F:proton-transporting ATP synthase activity, rotational mechanism"/>
    <property type="evidence" value="ECO:0007669"/>
    <property type="project" value="UniProtKB-UniRule"/>
</dbReference>
<dbReference type="FunFam" id="1.10.520.20:FF:000001">
    <property type="entry name" value="ATP synthase subunit delta"/>
    <property type="match status" value="1"/>
</dbReference>
<dbReference type="Gene3D" id="1.10.520.20">
    <property type="entry name" value="N-terminal domain of the delta subunit of the F1F0-ATP synthase"/>
    <property type="match status" value="1"/>
</dbReference>
<dbReference type="HAMAP" id="MF_01416">
    <property type="entry name" value="ATP_synth_delta_bact"/>
    <property type="match status" value="1"/>
</dbReference>
<dbReference type="InterPro" id="IPR026015">
    <property type="entry name" value="ATP_synth_OSCP/delta_N_sf"/>
</dbReference>
<dbReference type="InterPro" id="IPR020781">
    <property type="entry name" value="ATPase_OSCP/d_CS"/>
</dbReference>
<dbReference type="InterPro" id="IPR000711">
    <property type="entry name" value="ATPase_OSCP/dsu"/>
</dbReference>
<dbReference type="NCBIfam" id="TIGR01145">
    <property type="entry name" value="ATP_synt_delta"/>
    <property type="match status" value="1"/>
</dbReference>
<dbReference type="NCBIfam" id="NF004402">
    <property type="entry name" value="PRK05758.2-2"/>
    <property type="match status" value="1"/>
</dbReference>
<dbReference type="NCBIfam" id="NF004404">
    <property type="entry name" value="PRK05758.2-5"/>
    <property type="match status" value="1"/>
</dbReference>
<dbReference type="PANTHER" id="PTHR11910">
    <property type="entry name" value="ATP SYNTHASE DELTA CHAIN"/>
    <property type="match status" value="1"/>
</dbReference>
<dbReference type="Pfam" id="PF00213">
    <property type="entry name" value="OSCP"/>
    <property type="match status" value="1"/>
</dbReference>
<dbReference type="PRINTS" id="PR00125">
    <property type="entry name" value="ATPASEDELTA"/>
</dbReference>
<dbReference type="SUPFAM" id="SSF47928">
    <property type="entry name" value="N-terminal domain of the delta subunit of the F1F0-ATP synthase"/>
    <property type="match status" value="1"/>
</dbReference>
<dbReference type="PROSITE" id="PS00389">
    <property type="entry name" value="ATPASE_DELTA"/>
    <property type="match status" value="1"/>
</dbReference>
<keyword id="KW-0066">ATP synthesis</keyword>
<keyword id="KW-0997">Cell inner membrane</keyword>
<keyword id="KW-1003">Cell membrane</keyword>
<keyword id="KW-0139">CF(1)</keyword>
<keyword id="KW-0375">Hydrogen ion transport</keyword>
<keyword id="KW-0406">Ion transport</keyword>
<keyword id="KW-0472">Membrane</keyword>
<keyword id="KW-0813">Transport</keyword>
<name>ATPD_ECOLU</name>
<accession>B7NF51</accession>
<reference key="1">
    <citation type="journal article" date="2009" name="PLoS Genet.">
        <title>Organised genome dynamics in the Escherichia coli species results in highly diverse adaptive paths.</title>
        <authorList>
            <person name="Touchon M."/>
            <person name="Hoede C."/>
            <person name="Tenaillon O."/>
            <person name="Barbe V."/>
            <person name="Baeriswyl S."/>
            <person name="Bidet P."/>
            <person name="Bingen E."/>
            <person name="Bonacorsi S."/>
            <person name="Bouchier C."/>
            <person name="Bouvet O."/>
            <person name="Calteau A."/>
            <person name="Chiapello H."/>
            <person name="Clermont O."/>
            <person name="Cruveiller S."/>
            <person name="Danchin A."/>
            <person name="Diard M."/>
            <person name="Dossat C."/>
            <person name="Karoui M.E."/>
            <person name="Frapy E."/>
            <person name="Garry L."/>
            <person name="Ghigo J.M."/>
            <person name="Gilles A.M."/>
            <person name="Johnson J."/>
            <person name="Le Bouguenec C."/>
            <person name="Lescat M."/>
            <person name="Mangenot S."/>
            <person name="Martinez-Jehanne V."/>
            <person name="Matic I."/>
            <person name="Nassif X."/>
            <person name="Oztas S."/>
            <person name="Petit M.A."/>
            <person name="Pichon C."/>
            <person name="Rouy Z."/>
            <person name="Ruf C.S."/>
            <person name="Schneider D."/>
            <person name="Tourret J."/>
            <person name="Vacherie B."/>
            <person name="Vallenet D."/>
            <person name="Medigue C."/>
            <person name="Rocha E.P.C."/>
            <person name="Denamur E."/>
        </authorList>
    </citation>
    <scope>NUCLEOTIDE SEQUENCE [LARGE SCALE GENOMIC DNA]</scope>
    <source>
        <strain>UMN026 / ExPEC</strain>
    </source>
</reference>
<comment type="function">
    <text evidence="1">F(1)F(0) ATP synthase produces ATP from ADP in the presence of a proton or sodium gradient. F-type ATPases consist of two structural domains, F(1) containing the extramembraneous catalytic core and F(0) containing the membrane proton channel, linked together by a central stalk and a peripheral stalk. During catalysis, ATP synthesis in the catalytic domain of F(1) is coupled via a rotary mechanism of the central stalk subunits to proton translocation.</text>
</comment>
<comment type="function">
    <text evidence="1">This protein is part of the stalk that links CF(0) to CF(1). It either transmits conformational changes from CF(0) to CF(1) or is implicated in proton conduction.</text>
</comment>
<comment type="subunit">
    <text evidence="1">F-type ATPases have 2 components, F(1) - the catalytic core - and F(0) - the membrane proton channel. F(1) has five subunits: alpha(3), beta(3), gamma(1), delta(1), epsilon(1). F(0) has three main subunits: a(1), b(2) and c(10-14). The alpha and beta chains form an alternating ring which encloses part of the gamma chain. F(1) is attached to F(0) by a central stalk formed by the gamma and epsilon chains, while a peripheral stalk is formed by the delta and b chains.</text>
</comment>
<comment type="subcellular location">
    <subcellularLocation>
        <location evidence="1">Cell inner membrane</location>
        <topology evidence="1">Peripheral membrane protein</topology>
    </subcellularLocation>
</comment>
<comment type="similarity">
    <text evidence="1">Belongs to the ATPase delta chain family.</text>
</comment>